<evidence type="ECO:0000250" key="1">
    <source>
        <dbReference type="UniProtKB" id="P0DUV6"/>
    </source>
</evidence>
<evidence type="ECO:0000250" key="2">
    <source>
        <dbReference type="UniProtKB" id="Q7NIT8"/>
    </source>
</evidence>
<evidence type="ECO:0000255" key="3">
    <source>
        <dbReference type="PROSITE-ProRule" id="PRU01280"/>
    </source>
</evidence>
<evidence type="ECO:0000269" key="4">
    <source>
    </source>
</evidence>
<evidence type="ECO:0000269" key="5">
    <source>
    </source>
</evidence>
<evidence type="ECO:0000269" key="6">
    <source>
    </source>
</evidence>
<evidence type="ECO:0000269" key="7">
    <source>
    </source>
</evidence>
<evidence type="ECO:0000303" key="8">
    <source>
    </source>
</evidence>
<evidence type="ECO:0000303" key="9">
    <source>
    </source>
</evidence>
<evidence type="ECO:0000305" key="10"/>
<evidence type="ECO:0000305" key="11">
    <source>
    </source>
</evidence>
<evidence type="ECO:0000305" key="12">
    <source>
    </source>
</evidence>
<dbReference type="EMBL" id="AF026270">
    <property type="protein sequence ID" value="AAD39013.1"/>
    <property type="molecule type" value="Genomic_DNA"/>
</dbReference>
<dbReference type="EMBL" id="AE006468">
    <property type="protein sequence ID" value="AAL20953.1"/>
    <property type="molecule type" value="Genomic_DNA"/>
</dbReference>
<dbReference type="RefSeq" id="NP_460994.1">
    <property type="nucleotide sequence ID" value="NC_003197.2"/>
</dbReference>
<dbReference type="RefSeq" id="WP_000549824.1">
    <property type="nucleotide sequence ID" value="NC_003197.2"/>
</dbReference>
<dbReference type="SMR" id="Q9XDN3"/>
<dbReference type="STRING" id="99287.STM2049"/>
<dbReference type="PaxDb" id="99287-STM2049"/>
<dbReference type="GeneID" id="1253570"/>
<dbReference type="KEGG" id="stm:STM2049"/>
<dbReference type="PATRIC" id="fig|99287.12.peg.2171"/>
<dbReference type="HOGENOM" id="CLU_148498_3_0_6"/>
<dbReference type="OMA" id="MIVQQIN"/>
<dbReference type="PhylomeDB" id="Q9XDN3"/>
<dbReference type="BioCyc" id="SENT99287:STM2049-MONOMER"/>
<dbReference type="UniPathway" id="UPA00621"/>
<dbReference type="Proteomes" id="UP000001014">
    <property type="component" value="Chromosome"/>
</dbReference>
<dbReference type="GO" id="GO:0031472">
    <property type="term" value="C:propanediol degradation polyhedral organelle"/>
    <property type="evidence" value="ECO:0000314"/>
    <property type="project" value="UniProtKB"/>
</dbReference>
<dbReference type="GO" id="GO:0051144">
    <property type="term" value="P:propanediol catabolic process"/>
    <property type="evidence" value="ECO:0007669"/>
    <property type="project" value="UniProtKB-UniPathway"/>
</dbReference>
<dbReference type="CDD" id="cd01614">
    <property type="entry name" value="EutN_CcmL"/>
    <property type="match status" value="1"/>
</dbReference>
<dbReference type="Gene3D" id="2.40.50.220">
    <property type="entry name" value="EutN/Ccml"/>
    <property type="match status" value="1"/>
</dbReference>
<dbReference type="InterPro" id="IPR004992">
    <property type="entry name" value="EutN_CcmL"/>
</dbReference>
<dbReference type="InterPro" id="IPR036677">
    <property type="entry name" value="EutN_CcmL_sf"/>
</dbReference>
<dbReference type="PANTHER" id="PTHR36539:SF1">
    <property type="entry name" value="BACTERIAL MICROCOMPARTMENT SHELL VERTEX PROTEIN EUTN"/>
    <property type="match status" value="1"/>
</dbReference>
<dbReference type="PANTHER" id="PTHR36539">
    <property type="entry name" value="ETHANOLAMINE UTILIZATION PROTEIN EUTN"/>
    <property type="match status" value="1"/>
</dbReference>
<dbReference type="Pfam" id="PF03319">
    <property type="entry name" value="EutN_CcmL"/>
    <property type="match status" value="1"/>
</dbReference>
<dbReference type="SUPFAM" id="SSF159133">
    <property type="entry name" value="EutN/CcmL-like"/>
    <property type="match status" value="1"/>
</dbReference>
<dbReference type="PROSITE" id="PS51932">
    <property type="entry name" value="BMV"/>
    <property type="match status" value="1"/>
</dbReference>
<feature type="chain" id="PRO_0000454268" description="Bacterial microcompartment shell vertex protein PduN">
    <location>
        <begin position="1"/>
        <end position="91"/>
    </location>
</feature>
<feature type="domain" description="BMV" evidence="3">
    <location>
        <begin position="1"/>
        <end position="87"/>
    </location>
</feature>
<protein>
    <recommendedName>
        <fullName evidence="9">Bacterial microcompartment shell vertex protein PduN</fullName>
    </recommendedName>
    <alternativeName>
        <fullName evidence="10">Bacterial microcompartment protein pentamer</fullName>
        <shortName evidence="10">BMC-P</shortName>
    </alternativeName>
    <alternativeName>
        <fullName>Propanediol utilization protein PduN</fullName>
    </alternativeName>
</protein>
<proteinExistence type="evidence at protein level"/>
<reference key="1">
    <citation type="journal article" date="1999" name="J. Bacteriol.">
        <title>The propanediol utilization (pdu) operon of Salmonella enterica serovar typhimurium LT2 includes genes necessary for formation of polyhedral organelles involved in coenzyme B(12)-dependent 1, 2-propanediol degradation.</title>
        <authorList>
            <person name="Bobik T.A."/>
            <person name="Havemann G.D."/>
            <person name="Busch R.J."/>
            <person name="Williams D.S."/>
            <person name="Aldrich H.C."/>
        </authorList>
    </citation>
    <scope>NUCLEOTIDE SEQUENCE [GENOMIC DNA]</scope>
    <scope>PATHWAY</scope>
    <scope>INDUCTION</scope>
    <source>
        <strain>LT2</strain>
    </source>
</reference>
<reference key="2">
    <citation type="journal article" date="2001" name="Nature">
        <title>Complete genome sequence of Salmonella enterica serovar Typhimurium LT2.</title>
        <authorList>
            <person name="McClelland M."/>
            <person name="Sanderson K.E."/>
            <person name="Spieth J."/>
            <person name="Clifton S.W."/>
            <person name="Latreille P."/>
            <person name="Courtney L."/>
            <person name="Porwollik S."/>
            <person name="Ali J."/>
            <person name="Dante M."/>
            <person name="Du F."/>
            <person name="Hou S."/>
            <person name="Layman D."/>
            <person name="Leonard S."/>
            <person name="Nguyen C."/>
            <person name="Scott K."/>
            <person name="Holmes A."/>
            <person name="Grewal N."/>
            <person name="Mulvaney E."/>
            <person name="Ryan E."/>
            <person name="Sun H."/>
            <person name="Florea L."/>
            <person name="Miller W."/>
            <person name="Stoneking T."/>
            <person name="Nhan M."/>
            <person name="Waterston R."/>
            <person name="Wilson R.K."/>
        </authorList>
    </citation>
    <scope>NUCLEOTIDE SEQUENCE [LARGE SCALE GENOMIC DNA]</scope>
    <source>
        <strain>LT2 / SGSC1412 / ATCC 700720</strain>
    </source>
</reference>
<reference key="3">
    <citation type="journal article" date="2003" name="J. Bacteriol.">
        <title>Protein content of polyhedral organelles involved in coenzyme B12-dependent degradation of 1,2-propanediol in Salmonella enterica serovar Typhimurium LT2.</title>
        <authorList>
            <person name="Havemann G.D."/>
            <person name="Bobik T.A."/>
        </authorList>
    </citation>
    <scope>BACTERIAL MICROCOMPARTMENT ABUNDANCE</scope>
    <source>
        <strain>LT2</strain>
    </source>
</reference>
<reference key="4">
    <citation type="journal article" date="2011" name="J. Bacteriol.">
        <title>Genetic analysis of the protein shell of the microcompartments involved in coenzyme B12-dependent 1,2-propanediol degradation by Salmonella.</title>
        <authorList>
            <person name="Cheng S."/>
            <person name="Sinha S."/>
            <person name="Fan C."/>
            <person name="Liu Y."/>
            <person name="Bobik T.A."/>
        </authorList>
    </citation>
    <scope>FUNCTION</scope>
    <scope>SUBCELLULAR LOCATION</scope>
    <scope>DISRUPTION PHENOTYPE</scope>
    <source>
        <strain>LT2</strain>
    </source>
</reference>
<reference key="5">
    <citation type="journal article" date="2013" name="Microbiology">
        <title>A synthetic system for expression of components of a bacterial microcompartment.</title>
        <authorList>
            <person name="Sargent F."/>
            <person name="Davidson F.A."/>
            <person name="Kelly C.L."/>
            <person name="Binny R."/>
            <person name="Christodoulides N."/>
            <person name="Gibson D."/>
            <person name="Johansson E."/>
            <person name="Kozyrska K."/>
            <person name="Lado L.L."/>
            <person name="MacCallum J."/>
            <person name="Montague R."/>
            <person name="Ortmann B."/>
            <person name="Owen R."/>
            <person name="Coulthurst S.J."/>
            <person name="Dupuy L."/>
            <person name="Prescott A.R."/>
            <person name="Palmer T."/>
        </authorList>
    </citation>
    <scope>BIOTECHNOLOGY (ARTIFICIAL BMCS)</scope>
    <source>
        <strain>LT2</strain>
    </source>
</reference>
<reference key="6">
    <citation type="journal article" date="2017" name="PLoS Comput. Biol.">
        <title>A systems-level model reveals that 1,2-Propanediol utilization microcompartments enhance pathway flux through intermediate sequestration.</title>
        <authorList>
            <person name="Jakobson C.M."/>
            <person name="Tullman-Ercek D."/>
            <person name="Slininger M.F."/>
            <person name="Mangan N.M."/>
        </authorList>
    </citation>
    <scope>SYSTEM-MODELING</scope>
    <scope>FUNCTION</scope>
    <source>
        <strain>LT2</strain>
    </source>
</reference>
<name>PDUN_SALTY</name>
<accession>Q9XDN3</accession>
<accession>Q7BV77</accession>
<comment type="function">
    <text evidence="6">Probably forms vertices in the shell of the bacterial microcompartment (BMC) dedicated to 1,2-propanediol (1,2-PD) degradation. Required for structural integrity of BMCs and to mitigate propionaldehyde toxicity.</text>
</comment>
<comment type="function">
    <text evidence="12">The 1,2-PD-specific bacterial microcompartment (BMC) concentrates low levels of 1,2-PD catabolic enzymes, concentrates volatile reaction intermediates thus enhancing pathway flux and keeps the level of toxic, mutagenic propionaldehyde low.</text>
</comment>
<comment type="pathway">
    <text evidence="11">Polyol metabolism; 1,2-propanediol degradation.</text>
</comment>
<comment type="subunit">
    <text evidence="1 2">Homopentamer (By similarity). Interacts with shell protein PduA (By similarity).</text>
</comment>
<comment type="subcellular location">
    <subcellularLocation>
        <location evidence="6">Bacterial microcompartment</location>
    </subcellularLocation>
</comment>
<comment type="induction">
    <text evidence="4">BMC production is induced by growth on 1,2-PD vitamin B12 medium.</text>
</comment>
<comment type="disruption phenotype">
    <text evidence="6">Forms BMCs with a variety of morphologies, including elongated, enlarged, and aggregated MCPs and some with rounded cross-sections. Grows in an interrupted manner on 1,2-PD and vitamin B12; grows for a while then stops, then restarts as if a toxic compound was accumulating and then decreases.</text>
</comment>
<comment type="biotechnology">
    <text evidence="7">Artificial BMCs can be made in E.coli by expressing pduA-pduB/B'-pduT-pduU-pduN-pduJ-pduK (in this order). Enzymes can be targeted to the BMC, and appear to be encapsulated within it.</text>
</comment>
<comment type="miscellaneous">
    <text evidence="4 5">Bacterial microcompartments (BMC) 100-200 nm in cross section are formed during aerobic growth on minimal 1,2-PD-B12 or anaerobic growth on 1,2-PD-tetrathionate medium, but not during aerobic growth on glucose, anerobic growth on glucose or pyruvate-tetrathionate (PubMed:10498708). BMCs can constitute up to 10% of total cell protein (PubMed:12923081).</text>
</comment>
<comment type="similarity">
    <text evidence="10">Belongs to the CcmL/EutN family.</text>
</comment>
<gene>
    <name evidence="8" type="primary">pduN</name>
    <name type="ordered locus">STM2049</name>
</gene>
<keyword id="KW-1283">Bacterial microcompartment</keyword>
<keyword id="KW-1185">Reference proteome</keyword>
<organism>
    <name type="scientific">Salmonella typhimurium (strain LT2 / SGSC1412 / ATCC 700720)</name>
    <dbReference type="NCBI Taxonomy" id="99287"/>
    <lineage>
        <taxon>Bacteria</taxon>
        <taxon>Pseudomonadati</taxon>
        <taxon>Pseudomonadota</taxon>
        <taxon>Gammaproteobacteria</taxon>
        <taxon>Enterobacterales</taxon>
        <taxon>Enterobacteriaceae</taxon>
        <taxon>Salmonella</taxon>
    </lineage>
</organism>
<sequence length="91" mass="9094">MHLARVTGAVVSTQKSPSLIGKKLLLVRRVSADGELPASPTSGDEVAVDSVGAGVGELVLLSGGSSARHVFSGPNEAIDLAVVGIVDTLSC</sequence>